<sequence length="415" mass="47338">MSHKSAEMYELKKKVEELKSYRGRATELVSLYIPAGYDINKVMQQLREEYGTAQNIKSKSTRKNVLGALERAMQHLKLYKQTPENGLALFVGNVSEQEGVSDIKLWAIVPPEPLNVRLYRCDQTFVTEPLEEMLRVKDAYGLITVEKNEATIGLLRGKRIEVIDELTSNVPGKTRAGGQSARRYERIREQETHEFMKRIGEHANKAFLPLLEKGELRGIIIGGPGPTKEEFVEGDYLHHELRKKVIGVVDISYHGEYGLRELVEKASDILKDHEAVKERQLIQEFFKHLVKDTGMITYGEKEVRKALELGAVDKLLISEGYDKVRVRAKCNNCGWEELKTMSEGEFHVYKKQLTHCPKCGSQNITFEKWDVAEELIKMAEESGADVEIISLDTEEGQQFYKAFGGLGAILRYKIQ</sequence>
<dbReference type="EMBL" id="AP006878">
    <property type="protein sequence ID" value="BAD85428.1"/>
    <property type="molecule type" value="Genomic_DNA"/>
</dbReference>
<dbReference type="RefSeq" id="WP_011250190.1">
    <property type="nucleotide sequence ID" value="NC_006624.1"/>
</dbReference>
<dbReference type="SMR" id="Q5JGK6"/>
<dbReference type="FunCoup" id="Q5JGK6">
    <property type="interactions" value="219"/>
</dbReference>
<dbReference type="IntAct" id="Q5JGK6">
    <property type="interactions" value="1"/>
</dbReference>
<dbReference type="MINT" id="Q5JGK6"/>
<dbReference type="STRING" id="69014.TK1239"/>
<dbReference type="EnsemblBacteria" id="BAD85428">
    <property type="protein sequence ID" value="BAD85428"/>
    <property type="gene ID" value="TK1239"/>
</dbReference>
<dbReference type="GeneID" id="78447755"/>
<dbReference type="KEGG" id="tko:TK1239"/>
<dbReference type="PATRIC" id="fig|69014.16.peg.1213"/>
<dbReference type="eggNOG" id="arCOG01742">
    <property type="taxonomic scope" value="Archaea"/>
</dbReference>
<dbReference type="HOGENOM" id="CLU_035759_3_0_2"/>
<dbReference type="InParanoid" id="Q5JGK6"/>
<dbReference type="OrthoDB" id="1011at2157"/>
<dbReference type="PhylomeDB" id="Q5JGK6"/>
<dbReference type="Proteomes" id="UP000000536">
    <property type="component" value="Chromosome"/>
</dbReference>
<dbReference type="GO" id="GO:0005829">
    <property type="term" value="C:cytosol"/>
    <property type="evidence" value="ECO:0000318"/>
    <property type="project" value="GO_Central"/>
</dbReference>
<dbReference type="GO" id="GO:0018444">
    <property type="term" value="C:translation release factor complex"/>
    <property type="evidence" value="ECO:0000318"/>
    <property type="project" value="GO_Central"/>
</dbReference>
<dbReference type="GO" id="GO:1990825">
    <property type="term" value="F:sequence-specific mRNA binding"/>
    <property type="evidence" value="ECO:0000318"/>
    <property type="project" value="GO_Central"/>
</dbReference>
<dbReference type="GO" id="GO:0016149">
    <property type="term" value="F:translation release factor activity, codon specific"/>
    <property type="evidence" value="ECO:0000318"/>
    <property type="project" value="GO_Central"/>
</dbReference>
<dbReference type="FunFam" id="3.30.1330.30:FF:000032">
    <property type="entry name" value="Eukaryotic peptide chain release factor subunit 1"/>
    <property type="match status" value="1"/>
</dbReference>
<dbReference type="FunFam" id="3.30.420.60:FF:000003">
    <property type="entry name" value="Peptide chain release factor subunit 1"/>
    <property type="match status" value="1"/>
</dbReference>
<dbReference type="FunFam" id="3.30.960.10:FF:000003">
    <property type="entry name" value="Peptide chain release factor subunit 1"/>
    <property type="match status" value="1"/>
</dbReference>
<dbReference type="Gene3D" id="3.30.1330.30">
    <property type="match status" value="1"/>
</dbReference>
<dbReference type="Gene3D" id="3.30.960.10">
    <property type="entry name" value="eRF1 domain 1"/>
    <property type="match status" value="1"/>
</dbReference>
<dbReference type="Gene3D" id="3.30.420.60">
    <property type="entry name" value="eRF1 domain 2"/>
    <property type="match status" value="1"/>
</dbReference>
<dbReference type="HAMAP" id="MF_00424">
    <property type="entry name" value="Rel_fact_arch_1"/>
    <property type="match status" value="1"/>
</dbReference>
<dbReference type="InterPro" id="IPR042226">
    <property type="entry name" value="eFR1_2_sf"/>
</dbReference>
<dbReference type="InterPro" id="IPR005140">
    <property type="entry name" value="eRF1_1_Pelota"/>
</dbReference>
<dbReference type="InterPro" id="IPR024049">
    <property type="entry name" value="eRF1_1_sf"/>
</dbReference>
<dbReference type="InterPro" id="IPR005141">
    <property type="entry name" value="eRF1_2"/>
</dbReference>
<dbReference type="InterPro" id="IPR005142">
    <property type="entry name" value="eRF1_3"/>
</dbReference>
<dbReference type="InterPro" id="IPR020918">
    <property type="entry name" value="Peptide_chain-rel_aRF1"/>
</dbReference>
<dbReference type="InterPro" id="IPR004403">
    <property type="entry name" value="Peptide_chain-rel_eRF1/aRF1"/>
</dbReference>
<dbReference type="InterPro" id="IPR029064">
    <property type="entry name" value="Ribosomal_eL30-like_sf"/>
</dbReference>
<dbReference type="NCBIfam" id="TIGR03676">
    <property type="entry name" value="aRF1_eRF1"/>
    <property type="match status" value="1"/>
</dbReference>
<dbReference type="PANTHER" id="PTHR10113">
    <property type="entry name" value="PEPTIDE CHAIN RELEASE FACTOR SUBUNIT 1"/>
    <property type="match status" value="1"/>
</dbReference>
<dbReference type="Pfam" id="PF03463">
    <property type="entry name" value="eRF1_1"/>
    <property type="match status" value="1"/>
</dbReference>
<dbReference type="Pfam" id="PF03464">
    <property type="entry name" value="eRF1_2"/>
    <property type="match status" value="1"/>
</dbReference>
<dbReference type="Pfam" id="PF03465">
    <property type="entry name" value="eRF1_3"/>
    <property type="match status" value="1"/>
</dbReference>
<dbReference type="SMART" id="SM01194">
    <property type="entry name" value="eRF1_1"/>
    <property type="match status" value="1"/>
</dbReference>
<dbReference type="SUPFAM" id="SSF55315">
    <property type="entry name" value="L30e-like"/>
    <property type="match status" value="1"/>
</dbReference>
<dbReference type="SUPFAM" id="SSF55481">
    <property type="entry name" value="N-terminal domain of eukaryotic peptide chain release factor subunit 1, ERF1"/>
    <property type="match status" value="1"/>
</dbReference>
<dbReference type="SUPFAM" id="SSF53137">
    <property type="entry name" value="Translational machinery components"/>
    <property type="match status" value="1"/>
</dbReference>
<gene>
    <name evidence="1" type="primary">prf1</name>
    <name type="ordered locus">TK1239</name>
</gene>
<reference key="1">
    <citation type="journal article" date="2005" name="Genome Res.">
        <title>Complete genome sequence of the hyperthermophilic archaeon Thermococcus kodakaraensis KOD1 and comparison with Pyrococcus genomes.</title>
        <authorList>
            <person name="Fukui T."/>
            <person name="Atomi H."/>
            <person name="Kanai T."/>
            <person name="Matsumi R."/>
            <person name="Fujiwara S."/>
            <person name="Imanaka T."/>
        </authorList>
    </citation>
    <scope>NUCLEOTIDE SEQUENCE [LARGE SCALE GENOMIC DNA]</scope>
    <source>
        <strain>ATCC BAA-918 / JCM 12380 / KOD1</strain>
    </source>
</reference>
<proteinExistence type="inferred from homology"/>
<name>RF1_THEKO</name>
<comment type="function">
    <text evidence="1">Directs the termination of nascent peptide synthesis (translation) in response to the termination codons UAA, UAG and UGA.</text>
</comment>
<comment type="subunit">
    <text evidence="1">Heterodimer of two subunits, one of which binds GTP.</text>
</comment>
<comment type="subcellular location">
    <subcellularLocation>
        <location evidence="1">Cytoplasm</location>
    </subcellularLocation>
</comment>
<comment type="similarity">
    <text evidence="1">Belongs to the eukaryotic release factor 1 family.</text>
</comment>
<feature type="chain" id="PRO_0000143184" description="Peptide chain release factor subunit 1">
    <location>
        <begin position="1"/>
        <end position="415"/>
    </location>
</feature>
<evidence type="ECO:0000255" key="1">
    <source>
        <dbReference type="HAMAP-Rule" id="MF_00424"/>
    </source>
</evidence>
<accession>Q5JGK6</accession>
<organism>
    <name type="scientific">Thermococcus kodakarensis (strain ATCC BAA-918 / JCM 12380 / KOD1)</name>
    <name type="common">Pyrococcus kodakaraensis (strain KOD1)</name>
    <dbReference type="NCBI Taxonomy" id="69014"/>
    <lineage>
        <taxon>Archaea</taxon>
        <taxon>Methanobacteriati</taxon>
        <taxon>Methanobacteriota</taxon>
        <taxon>Thermococci</taxon>
        <taxon>Thermococcales</taxon>
        <taxon>Thermococcaceae</taxon>
        <taxon>Thermococcus</taxon>
    </lineage>
</organism>
<protein>
    <recommendedName>
        <fullName evidence="1">Peptide chain release factor subunit 1</fullName>
    </recommendedName>
    <alternativeName>
        <fullName evidence="1">Translation termination factor aRF1</fullName>
    </alternativeName>
</protein>
<keyword id="KW-0963">Cytoplasm</keyword>
<keyword id="KW-0648">Protein biosynthesis</keyword>
<keyword id="KW-1185">Reference proteome</keyword>